<protein>
    <recommendedName>
        <fullName evidence="1">UPF0102 protein ECH_0093</fullName>
    </recommendedName>
</protein>
<gene>
    <name type="ordered locus">ECH_0093</name>
</gene>
<evidence type="ECO:0000255" key="1">
    <source>
        <dbReference type="HAMAP-Rule" id="MF_00048"/>
    </source>
</evidence>
<dbReference type="EMBL" id="CP000236">
    <property type="protein sequence ID" value="ABD44964.1"/>
    <property type="molecule type" value="Genomic_DNA"/>
</dbReference>
<dbReference type="RefSeq" id="WP_006010223.1">
    <property type="nucleotide sequence ID" value="NC_007799.1"/>
</dbReference>
<dbReference type="SMR" id="Q2GI11"/>
<dbReference type="KEGG" id="ech:ECH_0093"/>
<dbReference type="eggNOG" id="COG0792">
    <property type="taxonomic scope" value="Bacteria"/>
</dbReference>
<dbReference type="HOGENOM" id="CLU_115353_0_4_5"/>
<dbReference type="OrthoDB" id="9812968at2"/>
<dbReference type="Proteomes" id="UP000008320">
    <property type="component" value="Chromosome"/>
</dbReference>
<dbReference type="GO" id="GO:0003676">
    <property type="term" value="F:nucleic acid binding"/>
    <property type="evidence" value="ECO:0007669"/>
    <property type="project" value="InterPro"/>
</dbReference>
<dbReference type="Gene3D" id="3.40.1350.10">
    <property type="match status" value="1"/>
</dbReference>
<dbReference type="HAMAP" id="MF_00048">
    <property type="entry name" value="UPF0102"/>
    <property type="match status" value="1"/>
</dbReference>
<dbReference type="InterPro" id="IPR011335">
    <property type="entry name" value="Restrct_endonuc-II-like"/>
</dbReference>
<dbReference type="InterPro" id="IPR011856">
    <property type="entry name" value="tRNA_endonuc-like_dom_sf"/>
</dbReference>
<dbReference type="InterPro" id="IPR003509">
    <property type="entry name" value="UPF0102_YraN-like"/>
</dbReference>
<dbReference type="NCBIfam" id="NF011276">
    <property type="entry name" value="PRK14683.1"/>
    <property type="match status" value="1"/>
</dbReference>
<dbReference type="PANTHER" id="PTHR34039">
    <property type="entry name" value="UPF0102 PROTEIN YRAN"/>
    <property type="match status" value="1"/>
</dbReference>
<dbReference type="PANTHER" id="PTHR34039:SF1">
    <property type="entry name" value="UPF0102 PROTEIN YRAN"/>
    <property type="match status" value="1"/>
</dbReference>
<dbReference type="Pfam" id="PF02021">
    <property type="entry name" value="UPF0102"/>
    <property type="match status" value="1"/>
</dbReference>
<dbReference type="SUPFAM" id="SSF52980">
    <property type="entry name" value="Restriction endonuclease-like"/>
    <property type="match status" value="1"/>
</dbReference>
<keyword id="KW-1185">Reference proteome</keyword>
<feature type="chain" id="PRO_0000336171" description="UPF0102 protein ECH_0093">
    <location>
        <begin position="1"/>
        <end position="122"/>
    </location>
</feature>
<organism>
    <name type="scientific">Ehrlichia chaffeensis (strain ATCC CRL-10679 / Arkansas)</name>
    <dbReference type="NCBI Taxonomy" id="205920"/>
    <lineage>
        <taxon>Bacteria</taxon>
        <taxon>Pseudomonadati</taxon>
        <taxon>Pseudomonadota</taxon>
        <taxon>Alphaproteobacteria</taxon>
        <taxon>Rickettsiales</taxon>
        <taxon>Anaplasmataceae</taxon>
        <taxon>Ehrlichia</taxon>
    </lineage>
</organism>
<sequence length="122" mass="14618">MFTKKNYKRVIYNIVGYLGEILIIWFLKCKGYYIIKHRYKCILGEIDIIACKNKYLAFIEVKTSIFGSEIPITNKQQRSIIKAAKSFITYHTKFEEYNIRFDLYFFSLSKGLIHIPHAWQEF</sequence>
<proteinExistence type="inferred from homology"/>
<accession>Q2GI11</accession>
<name>Y093_EHRCR</name>
<reference key="1">
    <citation type="journal article" date="2006" name="PLoS Genet.">
        <title>Comparative genomics of emerging human ehrlichiosis agents.</title>
        <authorList>
            <person name="Dunning Hotopp J.C."/>
            <person name="Lin M."/>
            <person name="Madupu R."/>
            <person name="Crabtree J."/>
            <person name="Angiuoli S.V."/>
            <person name="Eisen J.A."/>
            <person name="Seshadri R."/>
            <person name="Ren Q."/>
            <person name="Wu M."/>
            <person name="Utterback T.R."/>
            <person name="Smith S."/>
            <person name="Lewis M."/>
            <person name="Khouri H."/>
            <person name="Zhang C."/>
            <person name="Niu H."/>
            <person name="Lin Q."/>
            <person name="Ohashi N."/>
            <person name="Zhi N."/>
            <person name="Nelson W.C."/>
            <person name="Brinkac L.M."/>
            <person name="Dodson R.J."/>
            <person name="Rosovitz M.J."/>
            <person name="Sundaram J.P."/>
            <person name="Daugherty S.C."/>
            <person name="Davidsen T."/>
            <person name="Durkin A.S."/>
            <person name="Gwinn M.L."/>
            <person name="Haft D.H."/>
            <person name="Selengut J.D."/>
            <person name="Sullivan S.A."/>
            <person name="Zafar N."/>
            <person name="Zhou L."/>
            <person name="Benahmed F."/>
            <person name="Forberger H."/>
            <person name="Halpin R."/>
            <person name="Mulligan S."/>
            <person name="Robinson J."/>
            <person name="White O."/>
            <person name="Rikihisa Y."/>
            <person name="Tettelin H."/>
        </authorList>
    </citation>
    <scope>NUCLEOTIDE SEQUENCE [LARGE SCALE GENOMIC DNA]</scope>
    <source>
        <strain>ATCC CRL-10679 / Arkansas</strain>
    </source>
</reference>
<comment type="similarity">
    <text evidence="1">Belongs to the UPF0102 family.</text>
</comment>